<feature type="chain" id="PRO_0000286239" description="Spermidine/putrescine import ATP-binding protein PotA">
    <location>
        <begin position="1"/>
        <end position="364"/>
    </location>
</feature>
<feature type="domain" description="ABC transporter" evidence="1">
    <location>
        <begin position="6"/>
        <end position="236"/>
    </location>
</feature>
<feature type="binding site" evidence="1">
    <location>
        <begin position="38"/>
        <end position="45"/>
    </location>
    <ligand>
        <name>ATP</name>
        <dbReference type="ChEBI" id="CHEBI:30616"/>
    </ligand>
</feature>
<proteinExistence type="inferred from homology"/>
<sequence length="364" mass="41368">MTTPLIEIRQIYKSYGNTPILNNVSLNVNHGEFLTLLGPSGCGKTTLLRLISGFEQPTLGEIFINGQCVNQLPPQKRDVHTVFQSYALFPHLSVFENVAFALRCKKTPNQEIRKRVFDALKLVQLESLAERNVKQLSGGQQQRVAIARAIINRPQVLLLDEPLSSLDYRLRKAMQSELKQLQKTLNMTFIFVTHDQEEALSMSDRIVVFNHGHIEQIGTPKAVYETPANLHVAMFIGEANIFDIQVHTVKDQDIVTNIEGIQLSCKNTGNYQVNEWLHLIVRPEDIRVWSLSEVEKTEGMLPGRIVDIIYKGSTVDLKVELSSGKIINASEFFDEDDDKLEYTLHETVWVQWLPGWEVLLPHEG</sequence>
<organism>
    <name type="scientific">Legionella pneumophila (strain Lens)</name>
    <dbReference type="NCBI Taxonomy" id="297245"/>
    <lineage>
        <taxon>Bacteria</taxon>
        <taxon>Pseudomonadati</taxon>
        <taxon>Pseudomonadota</taxon>
        <taxon>Gammaproteobacteria</taxon>
        <taxon>Legionellales</taxon>
        <taxon>Legionellaceae</taxon>
        <taxon>Legionella</taxon>
    </lineage>
</organism>
<name>POTA_LEGPL</name>
<gene>
    <name evidence="1" type="primary">potA</name>
    <name type="ordered locus">lpl1148</name>
</gene>
<comment type="function">
    <text evidence="1">Part of the ABC transporter complex PotABCD involved in spermidine/putrescine import. Responsible for energy coupling to the transport system.</text>
</comment>
<comment type="catalytic activity">
    <reaction evidence="1">
        <text>ATP + H2O + polyamine-[polyamine-binding protein]Side 1 = ADP + phosphate + polyamineSide 2 + [polyamine-binding protein]Side 1.</text>
        <dbReference type="EC" id="7.6.2.11"/>
    </reaction>
</comment>
<comment type="subunit">
    <text evidence="1">The complex is composed of two ATP-binding proteins (PotA), two transmembrane proteins (PotB and PotC) and a solute-binding protein (PotD).</text>
</comment>
<comment type="subcellular location">
    <subcellularLocation>
        <location evidence="1">Cell inner membrane</location>
        <topology evidence="1">Peripheral membrane protein</topology>
    </subcellularLocation>
</comment>
<comment type="similarity">
    <text evidence="1">Belongs to the ABC transporter superfamily. Spermidine/putrescine importer (TC 3.A.1.11.1) family.</text>
</comment>
<reference key="1">
    <citation type="journal article" date="2004" name="Nat. Genet.">
        <title>Evidence in the Legionella pneumophila genome for exploitation of host cell functions and high genome plasticity.</title>
        <authorList>
            <person name="Cazalet C."/>
            <person name="Rusniok C."/>
            <person name="Brueggemann H."/>
            <person name="Zidane N."/>
            <person name="Magnier A."/>
            <person name="Ma L."/>
            <person name="Tichit M."/>
            <person name="Jarraud S."/>
            <person name="Bouchier C."/>
            <person name="Vandenesch F."/>
            <person name="Kunst F."/>
            <person name="Etienne J."/>
            <person name="Glaser P."/>
            <person name="Buchrieser C."/>
        </authorList>
    </citation>
    <scope>NUCLEOTIDE SEQUENCE [LARGE SCALE GENOMIC DNA]</scope>
    <source>
        <strain>Lens</strain>
    </source>
</reference>
<protein>
    <recommendedName>
        <fullName evidence="1">Spermidine/putrescine import ATP-binding protein PotA</fullName>
        <ecNumber evidence="1">7.6.2.11</ecNumber>
    </recommendedName>
</protein>
<dbReference type="EC" id="7.6.2.11" evidence="1"/>
<dbReference type="EMBL" id="CR628337">
    <property type="protein sequence ID" value="CAH15387.1"/>
    <property type="molecule type" value="Genomic_DNA"/>
</dbReference>
<dbReference type="RefSeq" id="WP_011215245.1">
    <property type="nucleotide sequence ID" value="NC_006369.1"/>
</dbReference>
<dbReference type="SMR" id="Q5WXF0"/>
<dbReference type="KEGG" id="lpf:lpl1148"/>
<dbReference type="LegioList" id="lpl1148"/>
<dbReference type="HOGENOM" id="CLU_000604_1_1_6"/>
<dbReference type="Proteomes" id="UP000002517">
    <property type="component" value="Chromosome"/>
</dbReference>
<dbReference type="GO" id="GO:0043190">
    <property type="term" value="C:ATP-binding cassette (ABC) transporter complex"/>
    <property type="evidence" value="ECO:0007669"/>
    <property type="project" value="InterPro"/>
</dbReference>
<dbReference type="GO" id="GO:0015417">
    <property type="term" value="F:ABC-type polyamine transporter activity"/>
    <property type="evidence" value="ECO:0007669"/>
    <property type="project" value="UniProtKB-EC"/>
</dbReference>
<dbReference type="GO" id="GO:0005524">
    <property type="term" value="F:ATP binding"/>
    <property type="evidence" value="ECO:0007669"/>
    <property type="project" value="UniProtKB-KW"/>
</dbReference>
<dbReference type="GO" id="GO:0016887">
    <property type="term" value="F:ATP hydrolysis activity"/>
    <property type="evidence" value="ECO:0007669"/>
    <property type="project" value="InterPro"/>
</dbReference>
<dbReference type="FunFam" id="3.40.50.300:FF:000133">
    <property type="entry name" value="Spermidine/putrescine import ATP-binding protein PotA"/>
    <property type="match status" value="1"/>
</dbReference>
<dbReference type="Gene3D" id="2.40.50.100">
    <property type="match status" value="1"/>
</dbReference>
<dbReference type="Gene3D" id="3.40.50.300">
    <property type="entry name" value="P-loop containing nucleotide triphosphate hydrolases"/>
    <property type="match status" value="1"/>
</dbReference>
<dbReference type="InterPro" id="IPR003593">
    <property type="entry name" value="AAA+_ATPase"/>
</dbReference>
<dbReference type="InterPro" id="IPR050093">
    <property type="entry name" value="ABC_SmlMolc_Importer"/>
</dbReference>
<dbReference type="InterPro" id="IPR003439">
    <property type="entry name" value="ABC_transporter-like_ATP-bd"/>
</dbReference>
<dbReference type="InterPro" id="IPR017871">
    <property type="entry name" value="ABC_transporter-like_CS"/>
</dbReference>
<dbReference type="InterPro" id="IPR008995">
    <property type="entry name" value="Mo/tungstate-bd_C_term_dom"/>
</dbReference>
<dbReference type="InterPro" id="IPR027417">
    <property type="entry name" value="P-loop_NTPase"/>
</dbReference>
<dbReference type="InterPro" id="IPR005893">
    <property type="entry name" value="PotA-like"/>
</dbReference>
<dbReference type="InterPro" id="IPR013611">
    <property type="entry name" value="Transp-assoc_OB_typ2"/>
</dbReference>
<dbReference type="NCBIfam" id="TIGR01187">
    <property type="entry name" value="potA"/>
    <property type="match status" value="1"/>
</dbReference>
<dbReference type="NCBIfam" id="NF006987">
    <property type="entry name" value="PRK09452.1"/>
    <property type="match status" value="1"/>
</dbReference>
<dbReference type="PANTHER" id="PTHR42781">
    <property type="entry name" value="SPERMIDINE/PUTRESCINE IMPORT ATP-BINDING PROTEIN POTA"/>
    <property type="match status" value="1"/>
</dbReference>
<dbReference type="PANTHER" id="PTHR42781:SF4">
    <property type="entry name" value="SPERMIDINE_PUTRESCINE IMPORT ATP-BINDING PROTEIN POTA"/>
    <property type="match status" value="1"/>
</dbReference>
<dbReference type="Pfam" id="PF00005">
    <property type="entry name" value="ABC_tran"/>
    <property type="match status" value="1"/>
</dbReference>
<dbReference type="Pfam" id="PF08402">
    <property type="entry name" value="TOBE_2"/>
    <property type="match status" value="1"/>
</dbReference>
<dbReference type="SMART" id="SM00382">
    <property type="entry name" value="AAA"/>
    <property type="match status" value="1"/>
</dbReference>
<dbReference type="SUPFAM" id="SSF50331">
    <property type="entry name" value="MOP-like"/>
    <property type="match status" value="1"/>
</dbReference>
<dbReference type="SUPFAM" id="SSF52540">
    <property type="entry name" value="P-loop containing nucleoside triphosphate hydrolases"/>
    <property type="match status" value="1"/>
</dbReference>
<dbReference type="PROSITE" id="PS00211">
    <property type="entry name" value="ABC_TRANSPORTER_1"/>
    <property type="match status" value="1"/>
</dbReference>
<dbReference type="PROSITE" id="PS50893">
    <property type="entry name" value="ABC_TRANSPORTER_2"/>
    <property type="match status" value="1"/>
</dbReference>
<dbReference type="PROSITE" id="PS51305">
    <property type="entry name" value="POTA"/>
    <property type="match status" value="1"/>
</dbReference>
<keyword id="KW-0067">ATP-binding</keyword>
<keyword id="KW-0997">Cell inner membrane</keyword>
<keyword id="KW-1003">Cell membrane</keyword>
<keyword id="KW-0472">Membrane</keyword>
<keyword id="KW-0547">Nucleotide-binding</keyword>
<keyword id="KW-1278">Translocase</keyword>
<keyword id="KW-0813">Transport</keyword>
<accession>Q5WXF0</accession>
<evidence type="ECO:0000255" key="1">
    <source>
        <dbReference type="HAMAP-Rule" id="MF_01726"/>
    </source>
</evidence>